<organism>
    <name type="scientific">Cyanidium caldarium</name>
    <name type="common">Red alga</name>
    <dbReference type="NCBI Taxonomy" id="2771"/>
    <lineage>
        <taxon>Eukaryota</taxon>
        <taxon>Rhodophyta</taxon>
        <taxon>Bangiophyceae</taxon>
        <taxon>Cyanidiales</taxon>
        <taxon>Cyanidiaceae</taxon>
        <taxon>Cyanidium</taxon>
    </lineage>
</organism>
<accession>Q9TLX7</accession>
<keyword id="KW-0067">ATP-binding</keyword>
<keyword id="KW-0149">Chlorophyll biosynthesis</keyword>
<keyword id="KW-0150">Chloroplast</keyword>
<keyword id="KW-0436">Ligase</keyword>
<keyword id="KW-0547">Nucleotide-binding</keyword>
<keyword id="KW-0602">Photosynthesis</keyword>
<keyword id="KW-0934">Plastid</keyword>
<feature type="chain" id="PRO_0000206865" description="Magnesium-chelatase subunit ChlI">
    <location>
        <begin position="1"/>
        <end position="353"/>
    </location>
</feature>
<feature type="binding site" evidence="1">
    <location>
        <begin position="49"/>
        <end position="56"/>
    </location>
    <ligand>
        <name>ATP</name>
        <dbReference type="ChEBI" id="CHEBI:30616"/>
    </ligand>
</feature>
<sequence length="353" mass="39532">MTSTADVFDKKDQFNFVFPFTAIVGQEEMKISLLLNVVDPKIGGVMIMGDRGTGKTTTIRALVDILPDILVVKDDPYNSHPHDVDLMSSEVQALVLNRMNIETCYTKVPLVDLPLGATEDRVCGSIDIEKALSEGKKSFEPGLLAKANRGLLYVDEINLLDDHLVDVLLDCSASGWNLVEREGISVKHPSKFVLIGSGNPEEGELRPQLLDRFGLHAEIKTVKDPELRVKIVEERTEFDKDPVAYIRKFSKSQDELREKIINAQNLLPKVEMPRELKFNISKICGILDIDGLRGDIVTNRASKAYAAIQQRNVVEIGDIQKVIVSCLRHRLRKDPLEIIESGEKIQKAFTNIF</sequence>
<dbReference type="EC" id="6.6.1.1"/>
<dbReference type="EMBL" id="AF022186">
    <property type="protein sequence ID" value="AAF12953.1"/>
    <property type="molecule type" value="Genomic_DNA"/>
</dbReference>
<dbReference type="RefSeq" id="NP_045141.1">
    <property type="nucleotide sequence ID" value="NC_001840.1"/>
</dbReference>
<dbReference type="SMR" id="Q9TLX7"/>
<dbReference type="GeneID" id="800136"/>
<dbReference type="UniPathway" id="UPA00668"/>
<dbReference type="GO" id="GO:0009507">
    <property type="term" value="C:chloroplast"/>
    <property type="evidence" value="ECO:0007669"/>
    <property type="project" value="UniProtKB-SubCell"/>
</dbReference>
<dbReference type="GO" id="GO:0005524">
    <property type="term" value="F:ATP binding"/>
    <property type="evidence" value="ECO:0007669"/>
    <property type="project" value="UniProtKB-KW"/>
</dbReference>
<dbReference type="GO" id="GO:0016887">
    <property type="term" value="F:ATP hydrolysis activity"/>
    <property type="evidence" value="ECO:0007669"/>
    <property type="project" value="InterPro"/>
</dbReference>
<dbReference type="GO" id="GO:0016851">
    <property type="term" value="F:magnesium chelatase activity"/>
    <property type="evidence" value="ECO:0007669"/>
    <property type="project" value="UniProtKB-EC"/>
</dbReference>
<dbReference type="GO" id="GO:0015995">
    <property type="term" value="P:chlorophyll biosynthetic process"/>
    <property type="evidence" value="ECO:0007669"/>
    <property type="project" value="UniProtKB-UniPathway"/>
</dbReference>
<dbReference type="GO" id="GO:0015979">
    <property type="term" value="P:photosynthesis"/>
    <property type="evidence" value="ECO:0007669"/>
    <property type="project" value="UniProtKB-KW"/>
</dbReference>
<dbReference type="FunFam" id="3.40.50.300:FF:000601">
    <property type="entry name" value="Mg-protoporphyrin IX chelatase"/>
    <property type="match status" value="1"/>
</dbReference>
<dbReference type="Gene3D" id="1.10.8.80">
    <property type="entry name" value="Magnesium chelatase subunit I, C-Terminal domain"/>
    <property type="match status" value="1"/>
</dbReference>
<dbReference type="Gene3D" id="3.40.50.300">
    <property type="entry name" value="P-loop containing nucleotide triphosphate hydrolases"/>
    <property type="match status" value="1"/>
</dbReference>
<dbReference type="InterPro" id="IPR003593">
    <property type="entry name" value="AAA+_ATPase"/>
</dbReference>
<dbReference type="InterPro" id="IPR045006">
    <property type="entry name" value="CHLI-like"/>
</dbReference>
<dbReference type="InterPro" id="IPR041628">
    <property type="entry name" value="ChlI/MoxR_AAA_lid"/>
</dbReference>
<dbReference type="InterPro" id="IPR011775">
    <property type="entry name" value="Mg_chelatase_ATPase-isu"/>
</dbReference>
<dbReference type="InterPro" id="IPR000523">
    <property type="entry name" value="Mg_chelatse_chII-like_cat_dom"/>
</dbReference>
<dbReference type="InterPro" id="IPR027417">
    <property type="entry name" value="P-loop_NTPase"/>
</dbReference>
<dbReference type="NCBIfam" id="TIGR02030">
    <property type="entry name" value="BchI-ChlI"/>
    <property type="match status" value="1"/>
</dbReference>
<dbReference type="PANTHER" id="PTHR32039">
    <property type="entry name" value="MAGNESIUM-CHELATASE SUBUNIT CHLI"/>
    <property type="match status" value="1"/>
</dbReference>
<dbReference type="PANTHER" id="PTHR32039:SF9">
    <property type="entry name" value="MAGNESIUM-CHELATASE SUBUNIT CHLI-2, CHLOROPLASTIC"/>
    <property type="match status" value="1"/>
</dbReference>
<dbReference type="Pfam" id="PF17863">
    <property type="entry name" value="AAA_lid_2"/>
    <property type="match status" value="1"/>
</dbReference>
<dbReference type="Pfam" id="PF01078">
    <property type="entry name" value="Mg_chelatase"/>
    <property type="match status" value="1"/>
</dbReference>
<dbReference type="SMART" id="SM00382">
    <property type="entry name" value="AAA"/>
    <property type="match status" value="1"/>
</dbReference>
<dbReference type="SUPFAM" id="SSF52540">
    <property type="entry name" value="P-loop containing nucleoside triphosphate hydrolases"/>
    <property type="match status" value="1"/>
</dbReference>
<comment type="function">
    <text>Involved in chlorophyll biosynthesis; introduces a magnesium ion into protoporphyrin IX to yield Mg-protoporphyrin IX.</text>
</comment>
<comment type="catalytic activity">
    <reaction>
        <text>protoporphyrin IX + Mg(2+) + ATP + H2O = Mg-protoporphyrin IX + ADP + phosphate + 3 H(+)</text>
        <dbReference type="Rhea" id="RHEA:13961"/>
        <dbReference type="ChEBI" id="CHEBI:15377"/>
        <dbReference type="ChEBI" id="CHEBI:15378"/>
        <dbReference type="ChEBI" id="CHEBI:18420"/>
        <dbReference type="ChEBI" id="CHEBI:30616"/>
        <dbReference type="ChEBI" id="CHEBI:43474"/>
        <dbReference type="ChEBI" id="CHEBI:57306"/>
        <dbReference type="ChEBI" id="CHEBI:60492"/>
        <dbReference type="ChEBI" id="CHEBI:456216"/>
        <dbReference type="EC" id="6.6.1.1"/>
    </reaction>
</comment>
<comment type="pathway">
    <text>Porphyrin-containing compound metabolism; chlorophyll biosynthesis.</text>
</comment>
<comment type="subcellular location">
    <subcellularLocation>
        <location>Plastid</location>
        <location>Chloroplast</location>
    </subcellularLocation>
</comment>
<comment type="similarity">
    <text evidence="2">Belongs to the Mg-chelatase subunits D/I family.</text>
</comment>
<proteinExistence type="inferred from homology"/>
<reference key="1">
    <citation type="journal article" date="2000" name="J. Mol. Evol.">
        <title>The structure and gene repertoire of an ancient red algal plastid genome.</title>
        <authorList>
            <person name="Gloeckner G."/>
            <person name="Rosenthal A."/>
            <person name="Valentin K.-U."/>
        </authorList>
    </citation>
    <scope>NUCLEOTIDE SEQUENCE [LARGE SCALE GENOMIC DNA]</scope>
    <source>
        <strain>RK-1</strain>
    </source>
</reference>
<name>CHLI_CYACA</name>
<gene>
    <name type="primary">chlI</name>
</gene>
<protein>
    <recommendedName>
        <fullName>Magnesium-chelatase subunit ChlI</fullName>
        <ecNumber>6.6.1.1</ecNumber>
    </recommendedName>
    <alternativeName>
        <fullName>Mg-protoporphyrin IX chelatase</fullName>
    </alternativeName>
</protein>
<geneLocation type="chloroplast"/>
<evidence type="ECO:0000255" key="1"/>
<evidence type="ECO:0000305" key="2"/>